<feature type="chain" id="PRO_1000046245" description="Large ribosomal subunit protein uL11">
    <location>
        <begin position="1"/>
        <end position="143"/>
    </location>
</feature>
<comment type="function">
    <text evidence="1">Forms part of the ribosomal stalk which helps the ribosome interact with GTP-bound translation factors.</text>
</comment>
<comment type="subunit">
    <text evidence="1">Part of the ribosomal stalk of the 50S ribosomal subunit. Interacts with L10 and the large rRNA to form the base of the stalk. L10 forms an elongated spine to which L12 dimers bind in a sequential fashion forming a multimeric L10(L12)X complex.</text>
</comment>
<comment type="PTM">
    <text evidence="1">One or more lysine residues are methylated.</text>
</comment>
<comment type="similarity">
    <text evidence="1">Belongs to the universal ribosomal protein uL11 family.</text>
</comment>
<reference key="1">
    <citation type="submission" date="2007-04" db="EMBL/GenBank/DDBJ databases">
        <title>Complete sequence of Pseudomonas mendocina ymp.</title>
        <authorList>
            <consortium name="US DOE Joint Genome Institute"/>
            <person name="Copeland A."/>
            <person name="Lucas S."/>
            <person name="Lapidus A."/>
            <person name="Barry K."/>
            <person name="Glavina del Rio T."/>
            <person name="Dalin E."/>
            <person name="Tice H."/>
            <person name="Pitluck S."/>
            <person name="Kiss H."/>
            <person name="Brettin T."/>
            <person name="Detter J.C."/>
            <person name="Bruce D."/>
            <person name="Han C."/>
            <person name="Schmutz J."/>
            <person name="Larimer F."/>
            <person name="Land M."/>
            <person name="Hauser L."/>
            <person name="Kyrpides N."/>
            <person name="Mikhailova N."/>
            <person name="Hersman L."/>
            <person name="Dubois J."/>
            <person name="Maurice P."/>
            <person name="Richardson P."/>
        </authorList>
    </citation>
    <scope>NUCLEOTIDE SEQUENCE [LARGE SCALE GENOMIC DNA]</scope>
    <source>
        <strain>ymp</strain>
    </source>
</reference>
<dbReference type="EMBL" id="CP000680">
    <property type="protein sequence ID" value="ABP86667.1"/>
    <property type="molecule type" value="Genomic_DNA"/>
</dbReference>
<dbReference type="SMR" id="A4XZA1"/>
<dbReference type="STRING" id="399739.Pmen_3920"/>
<dbReference type="KEGG" id="pmy:Pmen_3920"/>
<dbReference type="eggNOG" id="COG0080">
    <property type="taxonomic scope" value="Bacteria"/>
</dbReference>
<dbReference type="HOGENOM" id="CLU_074237_2_0_6"/>
<dbReference type="OrthoDB" id="9802408at2"/>
<dbReference type="GO" id="GO:0022625">
    <property type="term" value="C:cytosolic large ribosomal subunit"/>
    <property type="evidence" value="ECO:0007669"/>
    <property type="project" value="TreeGrafter"/>
</dbReference>
<dbReference type="GO" id="GO:0070180">
    <property type="term" value="F:large ribosomal subunit rRNA binding"/>
    <property type="evidence" value="ECO:0007669"/>
    <property type="project" value="UniProtKB-UniRule"/>
</dbReference>
<dbReference type="GO" id="GO:0003735">
    <property type="term" value="F:structural constituent of ribosome"/>
    <property type="evidence" value="ECO:0007669"/>
    <property type="project" value="InterPro"/>
</dbReference>
<dbReference type="GO" id="GO:0006412">
    <property type="term" value="P:translation"/>
    <property type="evidence" value="ECO:0007669"/>
    <property type="project" value="UniProtKB-UniRule"/>
</dbReference>
<dbReference type="CDD" id="cd00349">
    <property type="entry name" value="Ribosomal_L11"/>
    <property type="match status" value="1"/>
</dbReference>
<dbReference type="FunFam" id="1.10.10.250:FF:000001">
    <property type="entry name" value="50S ribosomal protein L11"/>
    <property type="match status" value="1"/>
</dbReference>
<dbReference type="FunFam" id="3.30.1550.10:FF:000001">
    <property type="entry name" value="50S ribosomal protein L11"/>
    <property type="match status" value="1"/>
</dbReference>
<dbReference type="Gene3D" id="1.10.10.250">
    <property type="entry name" value="Ribosomal protein L11, C-terminal domain"/>
    <property type="match status" value="1"/>
</dbReference>
<dbReference type="Gene3D" id="3.30.1550.10">
    <property type="entry name" value="Ribosomal protein L11/L12, N-terminal domain"/>
    <property type="match status" value="1"/>
</dbReference>
<dbReference type="HAMAP" id="MF_00736">
    <property type="entry name" value="Ribosomal_uL11"/>
    <property type="match status" value="1"/>
</dbReference>
<dbReference type="InterPro" id="IPR000911">
    <property type="entry name" value="Ribosomal_uL11"/>
</dbReference>
<dbReference type="InterPro" id="IPR006519">
    <property type="entry name" value="Ribosomal_uL11_bac-typ"/>
</dbReference>
<dbReference type="InterPro" id="IPR020783">
    <property type="entry name" value="Ribosomal_uL11_C"/>
</dbReference>
<dbReference type="InterPro" id="IPR036769">
    <property type="entry name" value="Ribosomal_uL11_C_sf"/>
</dbReference>
<dbReference type="InterPro" id="IPR020785">
    <property type="entry name" value="Ribosomal_uL11_CS"/>
</dbReference>
<dbReference type="InterPro" id="IPR020784">
    <property type="entry name" value="Ribosomal_uL11_N"/>
</dbReference>
<dbReference type="InterPro" id="IPR036796">
    <property type="entry name" value="Ribosomal_uL11_N_sf"/>
</dbReference>
<dbReference type="NCBIfam" id="TIGR01632">
    <property type="entry name" value="L11_bact"/>
    <property type="match status" value="1"/>
</dbReference>
<dbReference type="PANTHER" id="PTHR11661">
    <property type="entry name" value="60S RIBOSOMAL PROTEIN L12"/>
    <property type="match status" value="1"/>
</dbReference>
<dbReference type="PANTHER" id="PTHR11661:SF1">
    <property type="entry name" value="LARGE RIBOSOMAL SUBUNIT PROTEIN UL11M"/>
    <property type="match status" value="1"/>
</dbReference>
<dbReference type="Pfam" id="PF00298">
    <property type="entry name" value="Ribosomal_L11"/>
    <property type="match status" value="1"/>
</dbReference>
<dbReference type="Pfam" id="PF03946">
    <property type="entry name" value="Ribosomal_L11_N"/>
    <property type="match status" value="1"/>
</dbReference>
<dbReference type="SMART" id="SM00649">
    <property type="entry name" value="RL11"/>
    <property type="match status" value="1"/>
</dbReference>
<dbReference type="SUPFAM" id="SSF54747">
    <property type="entry name" value="Ribosomal L11/L12e N-terminal domain"/>
    <property type="match status" value="1"/>
</dbReference>
<dbReference type="SUPFAM" id="SSF46906">
    <property type="entry name" value="Ribosomal protein L11, C-terminal domain"/>
    <property type="match status" value="1"/>
</dbReference>
<dbReference type="PROSITE" id="PS00359">
    <property type="entry name" value="RIBOSOMAL_L11"/>
    <property type="match status" value="1"/>
</dbReference>
<gene>
    <name evidence="1" type="primary">rplK</name>
    <name type="ordered locus">Pmen_3920</name>
</gene>
<name>RL11_ECTM1</name>
<keyword id="KW-0488">Methylation</keyword>
<keyword id="KW-0687">Ribonucleoprotein</keyword>
<keyword id="KW-0689">Ribosomal protein</keyword>
<keyword id="KW-0694">RNA-binding</keyword>
<keyword id="KW-0699">rRNA-binding</keyword>
<sequence>MAKKIQAYIKLQVKAGQANPSPPVGPALGQHGVNIMEFCKAFNAKTQGMEPGLPTPVIITVYSDRSFTFETKSTPASVLLKKAAGLTSGSARPNTVKVGTVTRAQLEEIAKTKQADLTAADLDAAVRTIAGSARSMGLNVEGV</sequence>
<evidence type="ECO:0000255" key="1">
    <source>
        <dbReference type="HAMAP-Rule" id="MF_00736"/>
    </source>
</evidence>
<evidence type="ECO:0000305" key="2"/>
<proteinExistence type="inferred from homology"/>
<protein>
    <recommendedName>
        <fullName evidence="1">Large ribosomal subunit protein uL11</fullName>
    </recommendedName>
    <alternativeName>
        <fullName evidence="2">50S ribosomal protein L11</fullName>
    </alternativeName>
</protein>
<organism>
    <name type="scientific">Ectopseudomonas mendocina (strain ymp)</name>
    <name type="common">Pseudomonas mendocina</name>
    <dbReference type="NCBI Taxonomy" id="399739"/>
    <lineage>
        <taxon>Bacteria</taxon>
        <taxon>Pseudomonadati</taxon>
        <taxon>Pseudomonadota</taxon>
        <taxon>Gammaproteobacteria</taxon>
        <taxon>Pseudomonadales</taxon>
        <taxon>Pseudomonadaceae</taxon>
        <taxon>Ectopseudomonas</taxon>
    </lineage>
</organism>
<accession>A4XZA1</accession>